<comment type="function">
    <text evidence="3 4">dTDP-6-deoxy-D-xylo-4-hexulose 3-epimerase that acts together with NovU to catalyze the formation of dTDP-4-keto-6-deoxy-5-C-methyl-L-lyxo-hexose from dTDP-4-keto-6-deoxy-D-glucose in the novobiocin biosynthesis pathway, an aminocoumarin family antibiotic that targets bacterial DNA gyrases.</text>
</comment>
<comment type="pathway">
    <text evidence="3">Antibiotic biosynthesis; novobiocin biosynthesis.</text>
</comment>
<comment type="miscellaneous">
    <text evidence="9">It is unclear whether NovW acts before or after C-methyltransferase NovU in the novobiocin biosynthesis pathway.</text>
</comment>
<comment type="similarity">
    <text evidence="7">Belongs to the dTDP-4-dehydrorhamnose 3,5-epimerase family.</text>
</comment>
<comment type="caution">
    <text evidence="8 9">Was initially characterized as a 3,5-epimerase in vitro (PubMed:15752721). However, it was later shown that it acts as a dTDP-6-deoxy-D-xylo-4-hexulose 3-epimerase in vivo (PubMed:16514445).</text>
</comment>
<keyword id="KW-0002">3D-structure</keyword>
<keyword id="KW-0045">Antibiotic biosynthesis</keyword>
<keyword id="KW-0413">Isomerase</keyword>
<sequence>MRLRPLGIEGVWEITPEQRADPRGVFLDWYHVDRFAEAIGRPLRLAQANLSVSVRGVVRGIHFVDVPPGQAKYVTCVRGAVFDVVVDLRVGSPTYGCWEGTRLDDVSRRAVYLSEGIGHGFCAISDEATLCYLSSGTYDPATEHGVHPLDPELAIDWPTGTPLLSPRDQDALLLAEARDAGLLPTYATCQAVTVPSPAPGSVGDPGP</sequence>
<organism>
    <name type="scientific">Streptomyces niveus</name>
    <name type="common">Streptomyces spheroides</name>
    <dbReference type="NCBI Taxonomy" id="193462"/>
    <lineage>
        <taxon>Bacteria</taxon>
        <taxon>Bacillati</taxon>
        <taxon>Actinomycetota</taxon>
        <taxon>Actinomycetes</taxon>
        <taxon>Kitasatosporales</taxon>
        <taxon>Streptomycetaceae</taxon>
        <taxon>Streptomyces</taxon>
    </lineage>
</organism>
<gene>
    <name evidence="5" type="primary">novW</name>
</gene>
<accession>Q9L9E5</accession>
<proteinExistence type="evidence at protein level"/>
<evidence type="ECO:0000250" key="1">
    <source>
        <dbReference type="UniProtKB" id="Q5SFD1"/>
    </source>
</evidence>
<evidence type="ECO:0000250" key="2">
    <source>
        <dbReference type="UniProtKB" id="Q9HU21"/>
    </source>
</evidence>
<evidence type="ECO:0000269" key="3">
    <source>
    </source>
</evidence>
<evidence type="ECO:0000269" key="4">
    <source>
    </source>
</evidence>
<evidence type="ECO:0000303" key="5">
    <source>
    </source>
</evidence>
<evidence type="ECO:0000303" key="6">
    <source>
    </source>
</evidence>
<evidence type="ECO:0000305" key="7"/>
<evidence type="ECO:0000305" key="8">
    <source>
    </source>
</evidence>
<evidence type="ECO:0000305" key="9">
    <source>
    </source>
</evidence>
<evidence type="ECO:0007829" key="10">
    <source>
        <dbReference type="PDB" id="2C0Z"/>
    </source>
</evidence>
<name>NOVW_STRNV</name>
<protein>
    <recommendedName>
        <fullName evidence="7">dTDP-4-dehydrorhamnose 3-epimerase</fullName>
        <ecNumber>5.1.3.-</ecNumber>
    </recommendedName>
    <alternativeName>
        <fullName evidence="5">Novobiocin biosynthesis protein W</fullName>
    </alternativeName>
    <alternativeName>
        <fullName evidence="6">dTDP-6-deoxy-D-xylo-4-hexulose 3-epimerase</fullName>
    </alternativeName>
</protein>
<feature type="chain" id="PRO_0000424010" description="dTDP-4-dehydrorhamnose 3-epimerase">
    <location>
        <begin position="1"/>
        <end position="207"/>
    </location>
</feature>
<feature type="active site" description="Proton acceptor" evidence="2">
    <location>
        <position position="62"/>
    </location>
</feature>
<feature type="active site" description="Proton donor" evidence="2">
    <location>
        <position position="132"/>
    </location>
</feature>
<feature type="binding site" evidence="2">
    <location>
        <position position="23"/>
    </location>
    <ligand>
        <name>substrate</name>
    </ligand>
</feature>
<feature type="binding site" evidence="2">
    <location>
        <position position="28"/>
    </location>
    <ligand>
        <name>substrate</name>
    </ligand>
</feature>
<feature type="binding site" evidence="2">
    <location>
        <begin position="47"/>
        <end position="49"/>
    </location>
    <ligand>
        <name>substrate</name>
    </ligand>
</feature>
<feature type="binding site" evidence="2">
    <location>
        <position position="59"/>
    </location>
    <ligand>
        <name>substrate</name>
    </ligand>
</feature>
<feature type="binding site" evidence="2">
    <location>
        <position position="72"/>
    </location>
    <ligand>
        <name>substrate</name>
    </ligand>
</feature>
<feature type="binding site" evidence="2">
    <location>
        <position position="119"/>
    </location>
    <ligand>
        <name>substrate</name>
    </ligand>
</feature>
<feature type="binding site" evidence="2">
    <location>
        <position position="143"/>
    </location>
    <ligand>
        <name>substrate</name>
    </ligand>
</feature>
<feature type="binding site" evidence="2">
    <location>
        <position position="167"/>
    </location>
    <ligand>
        <name>substrate</name>
    </ligand>
</feature>
<feature type="site" description="Participates in a stacking interaction with the thymidine ring of dTDP-4-oxo-6-deoxyglucose" evidence="1">
    <location>
        <position position="138"/>
    </location>
</feature>
<feature type="strand" evidence="10">
    <location>
        <begin position="2"/>
        <end position="5"/>
    </location>
</feature>
<feature type="strand" evidence="10">
    <location>
        <begin position="11"/>
        <end position="15"/>
    </location>
</feature>
<feature type="strand" evidence="10">
    <location>
        <begin position="17"/>
        <end position="21"/>
    </location>
</feature>
<feature type="strand" evidence="10">
    <location>
        <begin position="24"/>
        <end position="28"/>
    </location>
</feature>
<feature type="helix" evidence="10">
    <location>
        <begin position="32"/>
        <end position="39"/>
    </location>
</feature>
<feature type="strand" evidence="10">
    <location>
        <begin position="47"/>
        <end position="54"/>
    </location>
</feature>
<feature type="strand" evidence="10">
    <location>
        <begin position="57"/>
        <end position="64"/>
    </location>
</feature>
<feature type="turn" evidence="10">
    <location>
        <begin position="66"/>
        <end position="68"/>
    </location>
</feature>
<feature type="strand" evidence="10">
    <location>
        <begin position="72"/>
        <end position="87"/>
    </location>
</feature>
<feature type="turn" evidence="10">
    <location>
        <begin position="93"/>
        <end position="96"/>
    </location>
</feature>
<feature type="strand" evidence="10">
    <location>
        <begin position="98"/>
        <end position="104"/>
    </location>
</feature>
<feature type="turn" evidence="10">
    <location>
        <begin position="105"/>
        <end position="107"/>
    </location>
</feature>
<feature type="strand" evidence="10">
    <location>
        <begin position="110"/>
        <end position="113"/>
    </location>
</feature>
<feature type="strand" evidence="10">
    <location>
        <begin position="117"/>
        <end position="123"/>
    </location>
</feature>
<feature type="strand" evidence="10">
    <location>
        <begin position="125"/>
        <end position="136"/>
    </location>
</feature>
<feature type="turn" evidence="10">
    <location>
        <begin position="140"/>
        <end position="142"/>
    </location>
</feature>
<feature type="strand" evidence="10">
    <location>
        <begin position="143"/>
        <end position="146"/>
    </location>
</feature>
<feature type="turn" evidence="10">
    <location>
        <begin position="151"/>
        <end position="153"/>
    </location>
</feature>
<feature type="helix" evidence="10">
    <location>
        <begin position="166"/>
        <end position="169"/>
    </location>
</feature>
<feature type="helix" evidence="10">
    <location>
        <begin position="174"/>
        <end position="179"/>
    </location>
</feature>
<feature type="helix" evidence="10">
    <location>
        <begin position="186"/>
        <end position="189"/>
    </location>
</feature>
<reference key="1">
    <citation type="journal article" date="2000" name="Antimicrob. Agents Chemother.">
        <title>Identification of the novobiocin biosynthetic gene cluster of Streptomyces spheroides NCIB 11891.</title>
        <authorList>
            <person name="Steffensky M."/>
            <person name="Muhlenweg A."/>
            <person name="Wang Z.X."/>
            <person name="Li S.M."/>
            <person name="Heide L."/>
        </authorList>
    </citation>
    <scope>NUCLEOTIDE SEQUENCE [GENOMIC DNA]</scope>
    <source>
        <strain>ATCC 23965 / DSM 40292 / JCM 4252 / NBRC 12917 / NCIMB 11891 / NRRL 2449</strain>
    </source>
</reference>
<reference key="2">
    <citation type="journal article" date="2005" name="Arch. Biochem. Biophys.">
        <title>Functional characterizations of novWUS involved in novobiocin biosynthesis from Streptomyces spheroides.</title>
        <authorList>
            <person name="Thuy T.T."/>
            <person name="Lee H.C."/>
            <person name="Kim C.G."/>
            <person name="Heide L."/>
            <person name="Sohng J.K."/>
        </authorList>
    </citation>
    <scope>FUNCTION</scope>
    <scope>PATHWAY</scope>
    <source>
        <strain>ATCC 23965 / DSM 40292 / JCM 4252 / NBRC 12917 / NCIMB 11891 / NRRL 2449</strain>
    </source>
</reference>
<reference key="3">
    <citation type="journal article" date="2006" name="Chem. Commun. (Camb.)">
        <title>Characterisation of Streptomyces spheroides NovW and revision of its functional assignment to a dTDP-6-deoxy-D-xylo-4-hexulose 3-epimerase.</title>
        <authorList>
            <person name="Tello M."/>
            <person name="Jakimowicz P."/>
            <person name="Errey J.C."/>
            <person name="Freel Meyers C.L."/>
            <person name="Walsh C.T."/>
            <person name="Buttner M.J."/>
            <person name="Lawson D.M."/>
            <person name="Field R.A."/>
        </authorList>
    </citation>
    <scope>FUNCTION</scope>
    <source>
        <strain>ATCC 23965 / DSM 40292 / JCM 4252 / NBRC 12917 / NCIMB 11891 / NRRL 2449</strain>
    </source>
</reference>
<reference key="4">
    <citation type="journal article" date="2003" name="Acta Crystallogr. D">
        <title>Crystallization and preliminary X-ray studies on the putative dTDP sugar epimerase NovW from the novobiocin biosynthetic cluster of Streptomyces spheroides.</title>
        <authorList>
            <person name="Jakimowicz P."/>
            <person name="Freel Meyers C.L."/>
            <person name="Walsh C.T."/>
            <person name="Buttner M.J."/>
            <person name="Lawson D.M."/>
        </authorList>
    </citation>
    <scope>CRYSTALLIZATION</scope>
    <source>
        <strain>ATCC 23965 / DSM 40292 / JCM 4252 / NBRC 12917 / NCIMB 11891 / NRRL 2449</strain>
    </source>
</reference>
<reference key="5">
    <citation type="journal article" date="2006" name="Proteins">
        <title>The 1.6-A resolution crystal structure of NovW: a 4-keto-6-deoxy sugar epimerase from the novobiocin biosynthetic gene cluster of Streptomyces spheroides.</title>
        <authorList>
            <person name="Jakimowicz P."/>
            <person name="Tello M."/>
            <person name="Meyers C.L."/>
            <person name="Walsh C.T."/>
            <person name="Buttner M.J."/>
            <person name="Field R.A."/>
            <person name="Lawson D.M."/>
        </authorList>
    </citation>
    <scope>X-RAY CRYSTALLOGRAPHY (1.60 ANGSTROMS)</scope>
    <source>
        <strain>ATCC 23965 / DSM 40292 / JCM 4252 / NBRC 12917 / NCIMB 11891 / NRRL 2449</strain>
    </source>
</reference>
<dbReference type="EC" id="5.1.3.-"/>
<dbReference type="EMBL" id="AF170880">
    <property type="protein sequence ID" value="AAF67516.1"/>
    <property type="molecule type" value="Genomic_DNA"/>
</dbReference>
<dbReference type="RefSeq" id="WP_069626151.1">
    <property type="nucleotide sequence ID" value="NZ_JBFBIX010000004.1"/>
</dbReference>
<dbReference type="PDB" id="2C0Z">
    <property type="method" value="X-ray"/>
    <property type="resolution" value="1.60 A"/>
    <property type="chains" value="A=1-207"/>
</dbReference>
<dbReference type="PDBsum" id="2C0Z"/>
<dbReference type="SMR" id="Q9L9E5"/>
<dbReference type="KEGG" id="ag:AAF67516"/>
<dbReference type="BioCyc" id="MetaCyc:MONOMER-18088"/>
<dbReference type="UniPathway" id="UPA01035"/>
<dbReference type="EvolutionaryTrace" id="Q9L9E5"/>
<dbReference type="GO" id="GO:0005829">
    <property type="term" value="C:cytosol"/>
    <property type="evidence" value="ECO:0007669"/>
    <property type="project" value="TreeGrafter"/>
</dbReference>
<dbReference type="GO" id="GO:0008830">
    <property type="term" value="F:dTDP-4-dehydrorhamnose 3,5-epimerase activity"/>
    <property type="evidence" value="ECO:0007669"/>
    <property type="project" value="InterPro"/>
</dbReference>
<dbReference type="GO" id="GO:0016853">
    <property type="term" value="F:isomerase activity"/>
    <property type="evidence" value="ECO:0000314"/>
    <property type="project" value="UniProtKB"/>
</dbReference>
<dbReference type="GO" id="GO:0019305">
    <property type="term" value="P:dTDP-rhamnose biosynthetic process"/>
    <property type="evidence" value="ECO:0007669"/>
    <property type="project" value="TreeGrafter"/>
</dbReference>
<dbReference type="GO" id="GO:0043642">
    <property type="term" value="P:novobiocin biosynthetic process"/>
    <property type="evidence" value="ECO:0000314"/>
    <property type="project" value="UniProtKB"/>
</dbReference>
<dbReference type="GO" id="GO:0000271">
    <property type="term" value="P:polysaccharide biosynthetic process"/>
    <property type="evidence" value="ECO:0007669"/>
    <property type="project" value="TreeGrafter"/>
</dbReference>
<dbReference type="CDD" id="cd00438">
    <property type="entry name" value="cupin_RmlC"/>
    <property type="match status" value="1"/>
</dbReference>
<dbReference type="Gene3D" id="2.60.120.10">
    <property type="entry name" value="Jelly Rolls"/>
    <property type="match status" value="1"/>
</dbReference>
<dbReference type="InterPro" id="IPR000888">
    <property type="entry name" value="RmlC-like"/>
</dbReference>
<dbReference type="InterPro" id="IPR014710">
    <property type="entry name" value="RmlC-like_jellyroll"/>
</dbReference>
<dbReference type="InterPro" id="IPR011051">
    <property type="entry name" value="RmlC_Cupin_sf"/>
</dbReference>
<dbReference type="PANTHER" id="PTHR21047">
    <property type="entry name" value="DTDP-6-DEOXY-D-GLUCOSE-3,5 EPIMERASE"/>
    <property type="match status" value="1"/>
</dbReference>
<dbReference type="PANTHER" id="PTHR21047:SF2">
    <property type="entry name" value="THYMIDINE DIPHOSPHO-4-KETO-RHAMNOSE 3,5-EPIMERASE"/>
    <property type="match status" value="1"/>
</dbReference>
<dbReference type="Pfam" id="PF00908">
    <property type="entry name" value="dTDP_sugar_isom"/>
    <property type="match status" value="1"/>
</dbReference>
<dbReference type="SUPFAM" id="SSF51182">
    <property type="entry name" value="RmlC-like cupins"/>
    <property type="match status" value="1"/>
</dbReference>